<reference key="1">
    <citation type="journal article" date="2005" name="Nat. Biotechnol.">
        <title>Genome sequence of the chlorinated compound-respiring bacterium Dehalococcoides species strain CBDB1.</title>
        <authorList>
            <person name="Kube M."/>
            <person name="Beck A."/>
            <person name="Zinder S.H."/>
            <person name="Kuhl H."/>
            <person name="Reinhardt R."/>
            <person name="Adrian L."/>
        </authorList>
    </citation>
    <scope>NUCLEOTIDE SEQUENCE [LARGE SCALE GENOMIC DNA]</scope>
    <source>
        <strain>CBDB1</strain>
    </source>
</reference>
<feature type="chain" id="PRO_0000235364" description="Holliday junction branch migration complex subunit RuvB">
    <location>
        <begin position="1"/>
        <end position="349"/>
    </location>
</feature>
<feature type="region of interest" description="Large ATPase domain (RuvB-L)" evidence="1">
    <location>
        <begin position="1"/>
        <end position="185"/>
    </location>
</feature>
<feature type="region of interest" description="Small ATPAse domain (RuvB-S)" evidence="1">
    <location>
        <begin position="186"/>
        <end position="256"/>
    </location>
</feature>
<feature type="region of interest" description="Head domain (RuvB-H)" evidence="1">
    <location>
        <begin position="259"/>
        <end position="349"/>
    </location>
</feature>
<feature type="binding site" evidence="1">
    <location>
        <position position="24"/>
    </location>
    <ligand>
        <name>ATP</name>
        <dbReference type="ChEBI" id="CHEBI:30616"/>
    </ligand>
</feature>
<feature type="binding site" evidence="1">
    <location>
        <position position="25"/>
    </location>
    <ligand>
        <name>ATP</name>
        <dbReference type="ChEBI" id="CHEBI:30616"/>
    </ligand>
</feature>
<feature type="binding site" evidence="1">
    <location>
        <position position="66"/>
    </location>
    <ligand>
        <name>ATP</name>
        <dbReference type="ChEBI" id="CHEBI:30616"/>
    </ligand>
</feature>
<feature type="binding site" evidence="1">
    <location>
        <position position="69"/>
    </location>
    <ligand>
        <name>ATP</name>
        <dbReference type="ChEBI" id="CHEBI:30616"/>
    </ligand>
</feature>
<feature type="binding site" evidence="1">
    <location>
        <position position="70"/>
    </location>
    <ligand>
        <name>ATP</name>
        <dbReference type="ChEBI" id="CHEBI:30616"/>
    </ligand>
</feature>
<feature type="binding site" evidence="1">
    <location>
        <position position="70"/>
    </location>
    <ligand>
        <name>Mg(2+)</name>
        <dbReference type="ChEBI" id="CHEBI:18420"/>
    </ligand>
</feature>
<feature type="binding site" evidence="1">
    <location>
        <position position="71"/>
    </location>
    <ligand>
        <name>ATP</name>
        <dbReference type="ChEBI" id="CHEBI:30616"/>
    </ligand>
</feature>
<feature type="binding site" evidence="1">
    <location>
        <begin position="132"/>
        <end position="134"/>
    </location>
    <ligand>
        <name>ATP</name>
        <dbReference type="ChEBI" id="CHEBI:30616"/>
    </ligand>
</feature>
<feature type="binding site" evidence="1">
    <location>
        <position position="175"/>
    </location>
    <ligand>
        <name>ATP</name>
        <dbReference type="ChEBI" id="CHEBI:30616"/>
    </ligand>
</feature>
<feature type="binding site" evidence="1">
    <location>
        <position position="185"/>
    </location>
    <ligand>
        <name>ATP</name>
        <dbReference type="ChEBI" id="CHEBI:30616"/>
    </ligand>
</feature>
<feature type="binding site" evidence="1">
    <location>
        <position position="222"/>
    </location>
    <ligand>
        <name>ATP</name>
        <dbReference type="ChEBI" id="CHEBI:30616"/>
    </ligand>
</feature>
<feature type="binding site" evidence="1">
    <location>
        <position position="314"/>
    </location>
    <ligand>
        <name>DNA</name>
        <dbReference type="ChEBI" id="CHEBI:16991"/>
    </ligand>
</feature>
<feature type="binding site" evidence="1">
    <location>
        <position position="319"/>
    </location>
    <ligand>
        <name>DNA</name>
        <dbReference type="ChEBI" id="CHEBI:16991"/>
    </ligand>
</feature>
<name>RUVB_DEHMC</name>
<comment type="function">
    <text evidence="1">The RuvA-RuvB-RuvC complex processes Holliday junction (HJ) DNA during genetic recombination and DNA repair, while the RuvA-RuvB complex plays an important role in the rescue of blocked DNA replication forks via replication fork reversal (RFR). RuvA specifically binds to HJ cruciform DNA, conferring on it an open structure. The RuvB hexamer acts as an ATP-dependent pump, pulling dsDNA into and through the RuvAB complex. RuvB forms 2 homohexamers on either side of HJ DNA bound by 1 or 2 RuvA tetramers; 4 subunits per hexamer contact DNA at a time. Coordinated motions by a converter formed by DNA-disengaged RuvB subunits stimulates ATP hydrolysis and nucleotide exchange. Immobilization of the converter enables RuvB to convert the ATP-contained energy into a lever motion, pulling 2 nucleotides of DNA out of the RuvA tetramer per ATP hydrolyzed, thus driving DNA branch migration. The RuvB motors rotate together with the DNA substrate, which together with the progressing nucleotide cycle form the mechanistic basis for DNA recombination by continuous HJ branch migration. Branch migration allows RuvC to scan DNA until it finds its consensus sequence, where it cleaves and resolves cruciform DNA.</text>
</comment>
<comment type="catalytic activity">
    <reaction evidence="1">
        <text>ATP + H2O = ADP + phosphate + H(+)</text>
        <dbReference type="Rhea" id="RHEA:13065"/>
        <dbReference type="ChEBI" id="CHEBI:15377"/>
        <dbReference type="ChEBI" id="CHEBI:15378"/>
        <dbReference type="ChEBI" id="CHEBI:30616"/>
        <dbReference type="ChEBI" id="CHEBI:43474"/>
        <dbReference type="ChEBI" id="CHEBI:456216"/>
    </reaction>
</comment>
<comment type="subunit">
    <text evidence="1">Homohexamer. Forms an RuvA(8)-RuvB(12)-Holliday junction (HJ) complex. HJ DNA is sandwiched between 2 RuvA tetramers; dsDNA enters through RuvA and exits via RuvB. An RuvB hexamer assembles on each DNA strand where it exits the tetramer. Each RuvB hexamer is contacted by two RuvA subunits (via domain III) on 2 adjacent RuvB subunits; this complex drives branch migration. In the full resolvosome a probable DNA-RuvA(4)-RuvB(12)-RuvC(2) complex forms which resolves the HJ.</text>
</comment>
<comment type="subcellular location">
    <subcellularLocation>
        <location evidence="1">Cytoplasm</location>
    </subcellularLocation>
</comment>
<comment type="domain">
    <text evidence="1">Has 3 domains, the large (RuvB-L) and small ATPase (RuvB-S) domains and the C-terminal head (RuvB-H) domain. The head domain binds DNA, while the ATPase domains jointly bind ATP, ADP or are empty depending on the state of the subunit in the translocation cycle. During a single DNA translocation step the structure of each domain remains the same, but their relative positions change.</text>
</comment>
<comment type="similarity">
    <text evidence="1">Belongs to the RuvB family.</text>
</comment>
<dbReference type="EC" id="3.6.4.-" evidence="1"/>
<dbReference type="EMBL" id="AJ965256">
    <property type="protein sequence ID" value="CAI82768.1"/>
    <property type="molecule type" value="Genomic_DNA"/>
</dbReference>
<dbReference type="RefSeq" id="WP_011309119.1">
    <property type="nucleotide sequence ID" value="NC_007356.1"/>
</dbReference>
<dbReference type="SMR" id="Q3ZWZ9"/>
<dbReference type="KEGG" id="deh:cbdbA588"/>
<dbReference type="HOGENOM" id="CLU_055599_1_0_0"/>
<dbReference type="Proteomes" id="UP000000433">
    <property type="component" value="Chromosome"/>
</dbReference>
<dbReference type="GO" id="GO:0005737">
    <property type="term" value="C:cytoplasm"/>
    <property type="evidence" value="ECO:0007669"/>
    <property type="project" value="UniProtKB-SubCell"/>
</dbReference>
<dbReference type="GO" id="GO:0048476">
    <property type="term" value="C:Holliday junction resolvase complex"/>
    <property type="evidence" value="ECO:0007669"/>
    <property type="project" value="UniProtKB-UniRule"/>
</dbReference>
<dbReference type="GO" id="GO:0005524">
    <property type="term" value="F:ATP binding"/>
    <property type="evidence" value="ECO:0007669"/>
    <property type="project" value="UniProtKB-UniRule"/>
</dbReference>
<dbReference type="GO" id="GO:0016887">
    <property type="term" value="F:ATP hydrolysis activity"/>
    <property type="evidence" value="ECO:0007669"/>
    <property type="project" value="InterPro"/>
</dbReference>
<dbReference type="GO" id="GO:0000400">
    <property type="term" value="F:four-way junction DNA binding"/>
    <property type="evidence" value="ECO:0007669"/>
    <property type="project" value="UniProtKB-UniRule"/>
</dbReference>
<dbReference type="GO" id="GO:0009378">
    <property type="term" value="F:four-way junction helicase activity"/>
    <property type="evidence" value="ECO:0007669"/>
    <property type="project" value="InterPro"/>
</dbReference>
<dbReference type="GO" id="GO:0006310">
    <property type="term" value="P:DNA recombination"/>
    <property type="evidence" value="ECO:0007669"/>
    <property type="project" value="UniProtKB-UniRule"/>
</dbReference>
<dbReference type="GO" id="GO:0006281">
    <property type="term" value="P:DNA repair"/>
    <property type="evidence" value="ECO:0007669"/>
    <property type="project" value="UniProtKB-UniRule"/>
</dbReference>
<dbReference type="CDD" id="cd00009">
    <property type="entry name" value="AAA"/>
    <property type="match status" value="1"/>
</dbReference>
<dbReference type="Gene3D" id="1.10.8.60">
    <property type="match status" value="1"/>
</dbReference>
<dbReference type="Gene3D" id="3.40.50.300">
    <property type="entry name" value="P-loop containing nucleotide triphosphate hydrolases"/>
    <property type="match status" value="1"/>
</dbReference>
<dbReference type="Gene3D" id="1.10.10.10">
    <property type="entry name" value="Winged helix-like DNA-binding domain superfamily/Winged helix DNA-binding domain"/>
    <property type="match status" value="1"/>
</dbReference>
<dbReference type="HAMAP" id="MF_00016">
    <property type="entry name" value="DNA_HJ_migration_RuvB"/>
    <property type="match status" value="1"/>
</dbReference>
<dbReference type="InterPro" id="IPR003593">
    <property type="entry name" value="AAA+_ATPase"/>
</dbReference>
<dbReference type="InterPro" id="IPR041445">
    <property type="entry name" value="AAA_lid_4"/>
</dbReference>
<dbReference type="InterPro" id="IPR004605">
    <property type="entry name" value="DNA_helicase_Holl-junc_RuvB"/>
</dbReference>
<dbReference type="InterPro" id="IPR027417">
    <property type="entry name" value="P-loop_NTPase"/>
</dbReference>
<dbReference type="InterPro" id="IPR008824">
    <property type="entry name" value="RuvB-like_N"/>
</dbReference>
<dbReference type="InterPro" id="IPR008823">
    <property type="entry name" value="RuvB_C"/>
</dbReference>
<dbReference type="InterPro" id="IPR036388">
    <property type="entry name" value="WH-like_DNA-bd_sf"/>
</dbReference>
<dbReference type="InterPro" id="IPR036390">
    <property type="entry name" value="WH_DNA-bd_sf"/>
</dbReference>
<dbReference type="NCBIfam" id="NF000868">
    <property type="entry name" value="PRK00080.1"/>
    <property type="match status" value="1"/>
</dbReference>
<dbReference type="NCBIfam" id="TIGR00635">
    <property type="entry name" value="ruvB"/>
    <property type="match status" value="1"/>
</dbReference>
<dbReference type="PANTHER" id="PTHR42848">
    <property type="match status" value="1"/>
</dbReference>
<dbReference type="PANTHER" id="PTHR42848:SF1">
    <property type="entry name" value="HOLLIDAY JUNCTION BRANCH MIGRATION COMPLEX SUBUNIT RUVB"/>
    <property type="match status" value="1"/>
</dbReference>
<dbReference type="Pfam" id="PF17864">
    <property type="entry name" value="AAA_lid_4"/>
    <property type="match status" value="1"/>
</dbReference>
<dbReference type="Pfam" id="PF05491">
    <property type="entry name" value="RuvB_C"/>
    <property type="match status" value="1"/>
</dbReference>
<dbReference type="Pfam" id="PF05496">
    <property type="entry name" value="RuvB_N"/>
    <property type="match status" value="1"/>
</dbReference>
<dbReference type="SMART" id="SM00382">
    <property type="entry name" value="AAA"/>
    <property type="match status" value="1"/>
</dbReference>
<dbReference type="SUPFAM" id="SSF52540">
    <property type="entry name" value="P-loop containing nucleoside triphosphate hydrolases"/>
    <property type="match status" value="1"/>
</dbReference>
<dbReference type="SUPFAM" id="SSF46785">
    <property type="entry name" value="Winged helix' DNA-binding domain"/>
    <property type="match status" value="1"/>
</dbReference>
<evidence type="ECO:0000255" key="1">
    <source>
        <dbReference type="HAMAP-Rule" id="MF_00016"/>
    </source>
</evidence>
<proteinExistence type="inferred from homology"/>
<keyword id="KW-0067">ATP-binding</keyword>
<keyword id="KW-0963">Cytoplasm</keyword>
<keyword id="KW-0227">DNA damage</keyword>
<keyword id="KW-0233">DNA recombination</keyword>
<keyword id="KW-0234">DNA repair</keyword>
<keyword id="KW-0238">DNA-binding</keyword>
<keyword id="KW-0378">Hydrolase</keyword>
<keyword id="KW-0547">Nucleotide-binding</keyword>
<organism>
    <name type="scientific">Dehalococcoides mccartyi (strain CBDB1)</name>
    <dbReference type="NCBI Taxonomy" id="255470"/>
    <lineage>
        <taxon>Bacteria</taxon>
        <taxon>Bacillati</taxon>
        <taxon>Chloroflexota</taxon>
        <taxon>Dehalococcoidia</taxon>
        <taxon>Dehalococcoidales</taxon>
        <taxon>Dehalococcoidaceae</taxon>
        <taxon>Dehalococcoides</taxon>
    </lineage>
</organism>
<accession>Q3ZWZ9</accession>
<sequence length="349" mass="38782">MSQEKERLISGKLVTDDAKLDTSLRPRCLPDFIGQKRLKDNLGVAIQAAKQRGEALDHVLLYGPPGLGKTTLSHIIALEMGVNIRITSGPAIERQGDLAAILTNLKPFDILFIDEIHRLSRNVEEVLYPAMEDYALDIMVGKGPGARSLRLKLPHFTLIGATTRYAMLSAPLRDRFGSIFRLDFYDEEAIHDIVRRSARILGVEADENGLHQIACRSRGTPRVANRLLRRVRDYAQVKGNGLITADIAAESLACLEVDKLGLDEIDHKVLKTIIHKFGGGPVGLETIAAAISEEADTIMDVYEPYLLQLGFLERTPRGRQATRLAYQHLSIPYQNDKNNQQGLWTENGS</sequence>
<protein>
    <recommendedName>
        <fullName evidence="1">Holliday junction branch migration complex subunit RuvB</fullName>
        <ecNumber evidence="1">3.6.4.-</ecNumber>
    </recommendedName>
</protein>
<gene>
    <name evidence="1" type="primary">ruvB</name>
    <name type="ordered locus">cbdbA588</name>
</gene>